<evidence type="ECO:0000255" key="1">
    <source>
        <dbReference type="HAMAP-Rule" id="MF_00534"/>
    </source>
</evidence>
<comment type="catalytic activity">
    <reaction evidence="1">
        <text>tRNA(Asn) + L-asparagine + ATP = L-asparaginyl-tRNA(Asn) + AMP + diphosphate + H(+)</text>
        <dbReference type="Rhea" id="RHEA:11180"/>
        <dbReference type="Rhea" id="RHEA-COMP:9659"/>
        <dbReference type="Rhea" id="RHEA-COMP:9674"/>
        <dbReference type="ChEBI" id="CHEBI:15378"/>
        <dbReference type="ChEBI" id="CHEBI:30616"/>
        <dbReference type="ChEBI" id="CHEBI:33019"/>
        <dbReference type="ChEBI" id="CHEBI:58048"/>
        <dbReference type="ChEBI" id="CHEBI:78442"/>
        <dbReference type="ChEBI" id="CHEBI:78515"/>
        <dbReference type="ChEBI" id="CHEBI:456215"/>
        <dbReference type="EC" id="6.1.1.22"/>
    </reaction>
</comment>
<comment type="subunit">
    <text evidence="1">Homodimer.</text>
</comment>
<comment type="subcellular location">
    <subcellularLocation>
        <location evidence="1">Cytoplasm</location>
    </subcellularLocation>
</comment>
<comment type="similarity">
    <text evidence="1">Belongs to the class-II aminoacyl-tRNA synthetase family.</text>
</comment>
<organism>
    <name type="scientific">Treponema denticola (strain ATCC 35405 / DSM 14222 / CIP 103919 / JCM 8153 / KCTC 15104)</name>
    <dbReference type="NCBI Taxonomy" id="243275"/>
    <lineage>
        <taxon>Bacteria</taxon>
        <taxon>Pseudomonadati</taxon>
        <taxon>Spirochaetota</taxon>
        <taxon>Spirochaetia</taxon>
        <taxon>Spirochaetales</taxon>
        <taxon>Treponemataceae</taxon>
        <taxon>Treponema</taxon>
    </lineage>
</organism>
<keyword id="KW-0030">Aminoacyl-tRNA synthetase</keyword>
<keyword id="KW-0067">ATP-binding</keyword>
<keyword id="KW-0963">Cytoplasm</keyword>
<keyword id="KW-0436">Ligase</keyword>
<keyword id="KW-0547">Nucleotide-binding</keyword>
<keyword id="KW-0648">Protein biosynthesis</keyword>
<keyword id="KW-1185">Reference proteome</keyword>
<name>SYN_TREDE</name>
<accession>Q73P19</accession>
<proteinExistence type="inferred from homology"/>
<protein>
    <recommendedName>
        <fullName evidence="1">Asparagine--tRNA ligase</fullName>
        <ecNumber evidence="1">6.1.1.22</ecNumber>
    </recommendedName>
    <alternativeName>
        <fullName evidence="1">Asparaginyl-tRNA synthetase</fullName>
        <shortName evidence="1">AsnRS</shortName>
    </alternativeName>
</protein>
<sequence>MIHLIKDILTSEPKGQAIDVYGWVRTKRETKNLVFIEINDGSCFASIQATFDRDTGLDNNTEALLKKAGTGVSVKVSGNLVPSPAAGQRVELQANNIHIFGDADQEKYPLQKKRHSMEFLRDIAHLRARTNTFGAVARIRSQMAYAIHTFFQERGFQYVHTPIITGSDCEGAGEMFHVTTFDIEETVKKALKEKKDPDSFKIDYSQDFFGKQANLTVSGQLEGETYATALSRIYTFGPTFRAENSNTSRHLAEFWMVEPEMSFFTIKENMELAEEFIVYLLKWALEKCKEDLEFFDSRIKKGLIEMLKNVVNTPFTRLTYTEAIAELEKHIDRFEFKPYWGCDLQSEHERFLTEEVYKGPVIVTNYPKEIKSFYMKLNEDGKTVRAMDVLVPGLGEIIGGSEREENLDILQGRIKELGLREEDYWWYLDLRRYGTVPHSGFGLGFERLLLYVTGMGNIRDVIPFPRAPKLAEF</sequence>
<feature type="chain" id="PRO_0000176471" description="Asparagine--tRNA ligase">
    <location>
        <begin position="1"/>
        <end position="473"/>
    </location>
</feature>
<gene>
    <name evidence="1" type="primary">asnS</name>
    <name type="ordered locus">TDE_0980</name>
</gene>
<dbReference type="EC" id="6.1.1.22" evidence="1"/>
<dbReference type="EMBL" id="AE017226">
    <property type="protein sequence ID" value="AAS11471.1"/>
    <property type="molecule type" value="Genomic_DNA"/>
</dbReference>
<dbReference type="RefSeq" id="NP_971590.1">
    <property type="nucleotide sequence ID" value="NC_002967.9"/>
</dbReference>
<dbReference type="RefSeq" id="WP_002682293.1">
    <property type="nucleotide sequence ID" value="NC_002967.9"/>
</dbReference>
<dbReference type="SMR" id="Q73P19"/>
<dbReference type="STRING" id="243275.TDE_0980"/>
<dbReference type="PaxDb" id="243275-TDE_0980"/>
<dbReference type="GeneID" id="2740552"/>
<dbReference type="KEGG" id="tde:TDE_0980"/>
<dbReference type="PATRIC" id="fig|243275.7.peg.942"/>
<dbReference type="eggNOG" id="COG0017">
    <property type="taxonomic scope" value="Bacteria"/>
</dbReference>
<dbReference type="HOGENOM" id="CLU_004553_2_0_12"/>
<dbReference type="OrthoDB" id="9762036at2"/>
<dbReference type="Proteomes" id="UP000008212">
    <property type="component" value="Chromosome"/>
</dbReference>
<dbReference type="GO" id="GO:0005737">
    <property type="term" value="C:cytoplasm"/>
    <property type="evidence" value="ECO:0007669"/>
    <property type="project" value="UniProtKB-SubCell"/>
</dbReference>
<dbReference type="GO" id="GO:0004816">
    <property type="term" value="F:asparagine-tRNA ligase activity"/>
    <property type="evidence" value="ECO:0007669"/>
    <property type="project" value="UniProtKB-UniRule"/>
</dbReference>
<dbReference type="GO" id="GO:0005524">
    <property type="term" value="F:ATP binding"/>
    <property type="evidence" value="ECO:0007669"/>
    <property type="project" value="UniProtKB-UniRule"/>
</dbReference>
<dbReference type="GO" id="GO:0003676">
    <property type="term" value="F:nucleic acid binding"/>
    <property type="evidence" value="ECO:0007669"/>
    <property type="project" value="InterPro"/>
</dbReference>
<dbReference type="GO" id="GO:0006421">
    <property type="term" value="P:asparaginyl-tRNA aminoacylation"/>
    <property type="evidence" value="ECO:0007669"/>
    <property type="project" value="UniProtKB-UniRule"/>
</dbReference>
<dbReference type="CDD" id="cd00776">
    <property type="entry name" value="AsxRS_core"/>
    <property type="match status" value="1"/>
</dbReference>
<dbReference type="CDD" id="cd04318">
    <property type="entry name" value="EcAsnRS_like_N"/>
    <property type="match status" value="1"/>
</dbReference>
<dbReference type="FunFam" id="3.30.930.10:FF:000016">
    <property type="entry name" value="Asparagine--tRNA ligase"/>
    <property type="match status" value="1"/>
</dbReference>
<dbReference type="Gene3D" id="3.30.930.10">
    <property type="entry name" value="Bira Bifunctional Protein, Domain 2"/>
    <property type="match status" value="1"/>
</dbReference>
<dbReference type="Gene3D" id="2.40.50.140">
    <property type="entry name" value="Nucleic acid-binding proteins"/>
    <property type="match status" value="1"/>
</dbReference>
<dbReference type="HAMAP" id="MF_00534">
    <property type="entry name" value="Asn_tRNA_synth"/>
    <property type="match status" value="1"/>
</dbReference>
<dbReference type="InterPro" id="IPR004364">
    <property type="entry name" value="Aa-tRNA-synt_II"/>
</dbReference>
<dbReference type="InterPro" id="IPR006195">
    <property type="entry name" value="aa-tRNA-synth_II"/>
</dbReference>
<dbReference type="InterPro" id="IPR045864">
    <property type="entry name" value="aa-tRNA-synth_II/BPL/LPL"/>
</dbReference>
<dbReference type="InterPro" id="IPR004522">
    <property type="entry name" value="Asn-tRNA-ligase"/>
</dbReference>
<dbReference type="InterPro" id="IPR002312">
    <property type="entry name" value="Asp/Asn-tRNA-synth_IIb"/>
</dbReference>
<dbReference type="InterPro" id="IPR012340">
    <property type="entry name" value="NA-bd_OB-fold"/>
</dbReference>
<dbReference type="InterPro" id="IPR004365">
    <property type="entry name" value="NA-bd_OB_tRNA"/>
</dbReference>
<dbReference type="NCBIfam" id="TIGR00457">
    <property type="entry name" value="asnS"/>
    <property type="match status" value="1"/>
</dbReference>
<dbReference type="NCBIfam" id="NF003037">
    <property type="entry name" value="PRK03932.1"/>
    <property type="match status" value="1"/>
</dbReference>
<dbReference type="PANTHER" id="PTHR22594:SF34">
    <property type="entry name" value="ASPARAGINE--TRNA LIGASE, MITOCHONDRIAL-RELATED"/>
    <property type="match status" value="1"/>
</dbReference>
<dbReference type="PANTHER" id="PTHR22594">
    <property type="entry name" value="ASPARTYL/LYSYL-TRNA SYNTHETASE"/>
    <property type="match status" value="1"/>
</dbReference>
<dbReference type="Pfam" id="PF00152">
    <property type="entry name" value="tRNA-synt_2"/>
    <property type="match status" value="1"/>
</dbReference>
<dbReference type="Pfam" id="PF01336">
    <property type="entry name" value="tRNA_anti-codon"/>
    <property type="match status" value="1"/>
</dbReference>
<dbReference type="PRINTS" id="PR01042">
    <property type="entry name" value="TRNASYNTHASP"/>
</dbReference>
<dbReference type="SUPFAM" id="SSF55681">
    <property type="entry name" value="Class II aaRS and biotin synthetases"/>
    <property type="match status" value="1"/>
</dbReference>
<dbReference type="SUPFAM" id="SSF50249">
    <property type="entry name" value="Nucleic acid-binding proteins"/>
    <property type="match status" value="1"/>
</dbReference>
<dbReference type="PROSITE" id="PS50862">
    <property type="entry name" value="AA_TRNA_LIGASE_II"/>
    <property type="match status" value="1"/>
</dbReference>
<reference key="1">
    <citation type="journal article" date="2004" name="Proc. Natl. Acad. Sci. U.S.A.">
        <title>Comparison of the genome of the oral pathogen Treponema denticola with other spirochete genomes.</title>
        <authorList>
            <person name="Seshadri R."/>
            <person name="Myers G.S.A."/>
            <person name="Tettelin H."/>
            <person name="Eisen J.A."/>
            <person name="Heidelberg J.F."/>
            <person name="Dodson R.J."/>
            <person name="Davidsen T.M."/>
            <person name="DeBoy R.T."/>
            <person name="Fouts D.E."/>
            <person name="Haft D.H."/>
            <person name="Selengut J."/>
            <person name="Ren Q."/>
            <person name="Brinkac L.M."/>
            <person name="Madupu R."/>
            <person name="Kolonay J.F."/>
            <person name="Durkin S.A."/>
            <person name="Daugherty S.C."/>
            <person name="Shetty J."/>
            <person name="Shvartsbeyn A."/>
            <person name="Gebregeorgis E."/>
            <person name="Geer K."/>
            <person name="Tsegaye G."/>
            <person name="Malek J.A."/>
            <person name="Ayodeji B."/>
            <person name="Shatsman S."/>
            <person name="McLeod M.P."/>
            <person name="Smajs D."/>
            <person name="Howell J.K."/>
            <person name="Pal S."/>
            <person name="Amin A."/>
            <person name="Vashisth P."/>
            <person name="McNeill T.Z."/>
            <person name="Xiang Q."/>
            <person name="Sodergren E."/>
            <person name="Baca E."/>
            <person name="Weinstock G.M."/>
            <person name="Norris S.J."/>
            <person name="Fraser C.M."/>
            <person name="Paulsen I.T."/>
        </authorList>
    </citation>
    <scope>NUCLEOTIDE SEQUENCE [LARGE SCALE GENOMIC DNA]</scope>
    <source>
        <strain>ATCC 35405 / DSM 14222 / CIP 103919 / JCM 8153 / KCTC 15104</strain>
    </source>
</reference>